<feature type="chain" id="PRO_0000132165" description="Small ribosomal subunit protein uS13">
    <location>
        <begin position="1"/>
        <end position="132"/>
    </location>
</feature>
<feature type="region of interest" description="Disordered" evidence="2">
    <location>
        <begin position="101"/>
        <end position="132"/>
    </location>
</feature>
<feature type="compositionally biased region" description="Basic residues" evidence="2">
    <location>
        <begin position="101"/>
        <end position="125"/>
    </location>
</feature>
<comment type="function">
    <text evidence="1">Located at the top of the head of the 30S subunit, it contacts several helices of the 16S rRNA. In the 70S ribosome it contacts the 23S rRNA (bridge B1a) and protein L5 of the 50S subunit (bridge B1b), connecting the 2 subunits; these bridges are implicated in subunit movement. Contacts the tRNAs in the A and P-sites.</text>
</comment>
<comment type="subunit">
    <text evidence="1">Part of the 30S ribosomal subunit. Forms a loose heterodimer with protein S19. Forms two bridges to the 50S subunit in the 70S ribosome.</text>
</comment>
<comment type="similarity">
    <text evidence="1">Belongs to the universal ribosomal protein uS13 family.</text>
</comment>
<accession>Q9PQN6</accession>
<protein>
    <recommendedName>
        <fullName evidence="1">Small ribosomal subunit protein uS13</fullName>
    </recommendedName>
    <alternativeName>
        <fullName evidence="3">30S ribosomal protein S13</fullName>
    </alternativeName>
</protein>
<proteinExistence type="inferred from homology"/>
<sequence length="132" mass="15048">MARILGVDIPNDKRVVISLTYIFGIGKSTSQQILKLANIDENIRVKDLADEQIAEIRRVALNFVKANGEKLQLEGDLRRTVAMDIKRLMEIGSYRGIRHRRGLPVRGQRTKTNARTRKGPRKTVANKKIETR</sequence>
<dbReference type="EMBL" id="AF222894">
    <property type="protein sequence ID" value="AAF30664.1"/>
    <property type="molecule type" value="Genomic_DNA"/>
</dbReference>
<dbReference type="RefSeq" id="WP_006688863.1">
    <property type="nucleotide sequence ID" value="NC_002162.1"/>
</dbReference>
<dbReference type="SMR" id="Q9PQN6"/>
<dbReference type="STRING" id="273119.UU255"/>
<dbReference type="EnsemblBacteria" id="AAF30664">
    <property type="protein sequence ID" value="AAF30664"/>
    <property type="gene ID" value="UU255"/>
</dbReference>
<dbReference type="GeneID" id="29672542"/>
<dbReference type="KEGG" id="uur:UU255"/>
<dbReference type="eggNOG" id="COG0099">
    <property type="taxonomic scope" value="Bacteria"/>
</dbReference>
<dbReference type="HOGENOM" id="CLU_103849_1_2_14"/>
<dbReference type="OrthoDB" id="9803610at2"/>
<dbReference type="Proteomes" id="UP000000423">
    <property type="component" value="Chromosome"/>
</dbReference>
<dbReference type="GO" id="GO:0005829">
    <property type="term" value="C:cytosol"/>
    <property type="evidence" value="ECO:0007669"/>
    <property type="project" value="TreeGrafter"/>
</dbReference>
<dbReference type="GO" id="GO:0015935">
    <property type="term" value="C:small ribosomal subunit"/>
    <property type="evidence" value="ECO:0007669"/>
    <property type="project" value="TreeGrafter"/>
</dbReference>
<dbReference type="GO" id="GO:0019843">
    <property type="term" value="F:rRNA binding"/>
    <property type="evidence" value="ECO:0007669"/>
    <property type="project" value="UniProtKB-UniRule"/>
</dbReference>
<dbReference type="GO" id="GO:0003735">
    <property type="term" value="F:structural constituent of ribosome"/>
    <property type="evidence" value="ECO:0007669"/>
    <property type="project" value="InterPro"/>
</dbReference>
<dbReference type="GO" id="GO:0000049">
    <property type="term" value="F:tRNA binding"/>
    <property type="evidence" value="ECO:0007669"/>
    <property type="project" value="UniProtKB-UniRule"/>
</dbReference>
<dbReference type="GO" id="GO:0006412">
    <property type="term" value="P:translation"/>
    <property type="evidence" value="ECO:0007669"/>
    <property type="project" value="UniProtKB-UniRule"/>
</dbReference>
<dbReference type="FunFam" id="1.10.8.50:FF:000001">
    <property type="entry name" value="30S ribosomal protein S13"/>
    <property type="match status" value="1"/>
</dbReference>
<dbReference type="FunFam" id="4.10.910.10:FF:000001">
    <property type="entry name" value="30S ribosomal protein S13"/>
    <property type="match status" value="1"/>
</dbReference>
<dbReference type="Gene3D" id="1.10.8.50">
    <property type="match status" value="1"/>
</dbReference>
<dbReference type="Gene3D" id="4.10.910.10">
    <property type="entry name" value="30s ribosomal protein s13, domain 2"/>
    <property type="match status" value="1"/>
</dbReference>
<dbReference type="HAMAP" id="MF_01315">
    <property type="entry name" value="Ribosomal_uS13"/>
    <property type="match status" value="1"/>
</dbReference>
<dbReference type="InterPro" id="IPR027437">
    <property type="entry name" value="Rbsml_uS13_C"/>
</dbReference>
<dbReference type="InterPro" id="IPR001892">
    <property type="entry name" value="Ribosomal_uS13"/>
</dbReference>
<dbReference type="InterPro" id="IPR010979">
    <property type="entry name" value="Ribosomal_uS13-like_H2TH"/>
</dbReference>
<dbReference type="InterPro" id="IPR019980">
    <property type="entry name" value="Ribosomal_uS13_bac-type"/>
</dbReference>
<dbReference type="InterPro" id="IPR018269">
    <property type="entry name" value="Ribosomal_uS13_CS"/>
</dbReference>
<dbReference type="NCBIfam" id="TIGR03631">
    <property type="entry name" value="uS13_bact"/>
    <property type="match status" value="1"/>
</dbReference>
<dbReference type="PANTHER" id="PTHR10871">
    <property type="entry name" value="30S RIBOSOMAL PROTEIN S13/40S RIBOSOMAL PROTEIN S18"/>
    <property type="match status" value="1"/>
</dbReference>
<dbReference type="PANTHER" id="PTHR10871:SF1">
    <property type="entry name" value="SMALL RIBOSOMAL SUBUNIT PROTEIN US13M"/>
    <property type="match status" value="1"/>
</dbReference>
<dbReference type="Pfam" id="PF00416">
    <property type="entry name" value="Ribosomal_S13"/>
    <property type="match status" value="1"/>
</dbReference>
<dbReference type="PIRSF" id="PIRSF002134">
    <property type="entry name" value="Ribosomal_S13"/>
    <property type="match status" value="1"/>
</dbReference>
<dbReference type="SUPFAM" id="SSF46946">
    <property type="entry name" value="S13-like H2TH domain"/>
    <property type="match status" value="1"/>
</dbReference>
<dbReference type="PROSITE" id="PS00646">
    <property type="entry name" value="RIBOSOMAL_S13_1"/>
    <property type="match status" value="1"/>
</dbReference>
<dbReference type="PROSITE" id="PS50159">
    <property type="entry name" value="RIBOSOMAL_S13_2"/>
    <property type="match status" value="1"/>
</dbReference>
<name>RS13_UREPA</name>
<evidence type="ECO:0000255" key="1">
    <source>
        <dbReference type="HAMAP-Rule" id="MF_01315"/>
    </source>
</evidence>
<evidence type="ECO:0000256" key="2">
    <source>
        <dbReference type="SAM" id="MobiDB-lite"/>
    </source>
</evidence>
<evidence type="ECO:0000305" key="3"/>
<organism>
    <name type="scientific">Ureaplasma parvum serovar 3 (strain ATCC 700970)</name>
    <dbReference type="NCBI Taxonomy" id="273119"/>
    <lineage>
        <taxon>Bacteria</taxon>
        <taxon>Bacillati</taxon>
        <taxon>Mycoplasmatota</taxon>
        <taxon>Mycoplasmoidales</taxon>
        <taxon>Mycoplasmoidaceae</taxon>
        <taxon>Ureaplasma</taxon>
    </lineage>
</organism>
<reference key="1">
    <citation type="journal article" date="2000" name="Nature">
        <title>The complete sequence of the mucosal pathogen Ureaplasma urealyticum.</title>
        <authorList>
            <person name="Glass J.I."/>
            <person name="Lefkowitz E.J."/>
            <person name="Glass J.S."/>
            <person name="Heiner C.R."/>
            <person name="Chen E.Y."/>
            <person name="Cassell G.H."/>
        </authorList>
    </citation>
    <scope>NUCLEOTIDE SEQUENCE [LARGE SCALE GENOMIC DNA]</scope>
    <source>
        <strain>ATCC 700970</strain>
    </source>
</reference>
<gene>
    <name evidence="1" type="primary">rpsM</name>
    <name evidence="1" type="synonym">rps13</name>
    <name type="ordered locus">UU255</name>
</gene>
<keyword id="KW-1185">Reference proteome</keyword>
<keyword id="KW-0687">Ribonucleoprotein</keyword>
<keyword id="KW-0689">Ribosomal protein</keyword>
<keyword id="KW-0694">RNA-binding</keyword>
<keyword id="KW-0699">rRNA-binding</keyword>
<keyword id="KW-0820">tRNA-binding</keyword>